<proteinExistence type="inferred from homology"/>
<keyword id="KW-0687">Ribonucleoprotein</keyword>
<keyword id="KW-0689">Ribosomal protein</keyword>
<keyword id="KW-0694">RNA-binding</keyword>
<keyword id="KW-0699">rRNA-binding</keyword>
<evidence type="ECO:0000255" key="1">
    <source>
        <dbReference type="HAMAP-Rule" id="MF_00382"/>
    </source>
</evidence>
<evidence type="ECO:0000305" key="2"/>
<accession>A1AWT3</accession>
<name>RL20_RUTMC</name>
<reference key="1">
    <citation type="journal article" date="2007" name="Science">
        <title>The Calyptogena magnifica chemoautotrophic symbiont genome.</title>
        <authorList>
            <person name="Newton I.L.G."/>
            <person name="Woyke T."/>
            <person name="Auchtung T.A."/>
            <person name="Dilly G.F."/>
            <person name="Dutton R.J."/>
            <person name="Fisher M.C."/>
            <person name="Fontanez K.M."/>
            <person name="Lau E."/>
            <person name="Stewart F.J."/>
            <person name="Richardson P.M."/>
            <person name="Barry K.W."/>
            <person name="Saunders E."/>
            <person name="Detter J.C."/>
            <person name="Wu D."/>
            <person name="Eisen J.A."/>
            <person name="Cavanaugh C.M."/>
        </authorList>
    </citation>
    <scope>NUCLEOTIDE SEQUENCE [LARGE SCALE GENOMIC DNA]</scope>
</reference>
<sequence length="119" mass="13706">MARVSRGVQAHAKHKKILKKAKGYYGARSKVYRVAKQAVIKAGQYAYRDRRQRRRKFRRLWIVRINAEARNNGLSYSRMIDGISKADIEIDRKVLSDIAIFDKTAFAKIADQAKQALVV</sequence>
<feature type="chain" id="PRO_1000049061" description="Large ribosomal subunit protein bL20">
    <location>
        <begin position="1"/>
        <end position="119"/>
    </location>
</feature>
<gene>
    <name evidence="1" type="primary">rplT</name>
    <name type="ordered locus">Rmag_0645</name>
</gene>
<protein>
    <recommendedName>
        <fullName evidence="1">Large ribosomal subunit protein bL20</fullName>
    </recommendedName>
    <alternativeName>
        <fullName evidence="2">50S ribosomal protein L20</fullName>
    </alternativeName>
</protein>
<comment type="function">
    <text evidence="1">Binds directly to 23S ribosomal RNA and is necessary for the in vitro assembly process of the 50S ribosomal subunit. It is not involved in the protein synthesizing functions of that subunit.</text>
</comment>
<comment type="similarity">
    <text evidence="1">Belongs to the bacterial ribosomal protein bL20 family.</text>
</comment>
<organism>
    <name type="scientific">Ruthia magnifica subsp. Calyptogena magnifica</name>
    <dbReference type="NCBI Taxonomy" id="413404"/>
    <lineage>
        <taxon>Bacteria</taxon>
        <taxon>Pseudomonadati</taxon>
        <taxon>Pseudomonadota</taxon>
        <taxon>Gammaproteobacteria</taxon>
        <taxon>Candidatus Pseudothioglobaceae</taxon>
        <taxon>Candidatus Ruthturnera</taxon>
    </lineage>
</organism>
<dbReference type="EMBL" id="CP000488">
    <property type="protein sequence ID" value="ABL02390.1"/>
    <property type="molecule type" value="Genomic_DNA"/>
</dbReference>
<dbReference type="RefSeq" id="WP_011738015.1">
    <property type="nucleotide sequence ID" value="NC_008610.1"/>
</dbReference>
<dbReference type="SMR" id="A1AWT3"/>
<dbReference type="STRING" id="413404.Rmag_0645"/>
<dbReference type="KEGG" id="rma:Rmag_0645"/>
<dbReference type="eggNOG" id="COG0292">
    <property type="taxonomic scope" value="Bacteria"/>
</dbReference>
<dbReference type="HOGENOM" id="CLU_123265_0_1_6"/>
<dbReference type="OrthoDB" id="9808966at2"/>
<dbReference type="Proteomes" id="UP000002587">
    <property type="component" value="Chromosome"/>
</dbReference>
<dbReference type="GO" id="GO:1990904">
    <property type="term" value="C:ribonucleoprotein complex"/>
    <property type="evidence" value="ECO:0007669"/>
    <property type="project" value="UniProtKB-KW"/>
</dbReference>
<dbReference type="GO" id="GO:0005840">
    <property type="term" value="C:ribosome"/>
    <property type="evidence" value="ECO:0007669"/>
    <property type="project" value="UniProtKB-KW"/>
</dbReference>
<dbReference type="GO" id="GO:0019843">
    <property type="term" value="F:rRNA binding"/>
    <property type="evidence" value="ECO:0007669"/>
    <property type="project" value="UniProtKB-UniRule"/>
</dbReference>
<dbReference type="GO" id="GO:0003735">
    <property type="term" value="F:structural constituent of ribosome"/>
    <property type="evidence" value="ECO:0007669"/>
    <property type="project" value="InterPro"/>
</dbReference>
<dbReference type="GO" id="GO:0000027">
    <property type="term" value="P:ribosomal large subunit assembly"/>
    <property type="evidence" value="ECO:0007669"/>
    <property type="project" value="UniProtKB-UniRule"/>
</dbReference>
<dbReference type="GO" id="GO:0006412">
    <property type="term" value="P:translation"/>
    <property type="evidence" value="ECO:0007669"/>
    <property type="project" value="InterPro"/>
</dbReference>
<dbReference type="CDD" id="cd07026">
    <property type="entry name" value="Ribosomal_L20"/>
    <property type="match status" value="1"/>
</dbReference>
<dbReference type="FunFam" id="1.10.1900.20:FF:000001">
    <property type="entry name" value="50S ribosomal protein L20"/>
    <property type="match status" value="1"/>
</dbReference>
<dbReference type="Gene3D" id="6.10.160.10">
    <property type="match status" value="1"/>
</dbReference>
<dbReference type="Gene3D" id="1.10.1900.20">
    <property type="entry name" value="Ribosomal protein L20"/>
    <property type="match status" value="1"/>
</dbReference>
<dbReference type="HAMAP" id="MF_00382">
    <property type="entry name" value="Ribosomal_bL20"/>
    <property type="match status" value="1"/>
</dbReference>
<dbReference type="InterPro" id="IPR005813">
    <property type="entry name" value="Ribosomal_bL20"/>
</dbReference>
<dbReference type="InterPro" id="IPR035566">
    <property type="entry name" value="Ribosomal_protein_bL20_C"/>
</dbReference>
<dbReference type="NCBIfam" id="TIGR01032">
    <property type="entry name" value="rplT_bact"/>
    <property type="match status" value="1"/>
</dbReference>
<dbReference type="PANTHER" id="PTHR10986">
    <property type="entry name" value="39S RIBOSOMAL PROTEIN L20"/>
    <property type="match status" value="1"/>
</dbReference>
<dbReference type="Pfam" id="PF00453">
    <property type="entry name" value="Ribosomal_L20"/>
    <property type="match status" value="1"/>
</dbReference>
<dbReference type="PRINTS" id="PR00062">
    <property type="entry name" value="RIBOSOMALL20"/>
</dbReference>
<dbReference type="SUPFAM" id="SSF74731">
    <property type="entry name" value="Ribosomal protein L20"/>
    <property type="match status" value="1"/>
</dbReference>